<proteinExistence type="inferred from homology"/>
<reference key="1">
    <citation type="journal article" date="2008" name="J. Bacteriol.">
        <title>The complete genome sequence of Actinobacillus pleuropneumoniae L20 (serotype 5b).</title>
        <authorList>
            <person name="Foote S.J."/>
            <person name="Bosse J.T."/>
            <person name="Bouevitch A.B."/>
            <person name="Langford P.R."/>
            <person name="Young N.M."/>
            <person name="Nash J.H.E."/>
        </authorList>
    </citation>
    <scope>NUCLEOTIDE SEQUENCE [LARGE SCALE GENOMIC DNA]</scope>
    <source>
        <strain>L20</strain>
    </source>
</reference>
<comment type="function">
    <text evidence="1">Catalyzes the attachment of alanine to tRNA(Ala) in a two-step reaction: alanine is first activated by ATP to form Ala-AMP and then transferred to the acceptor end of tRNA(Ala). Also edits incorrectly charged Ser-tRNA(Ala) and Gly-tRNA(Ala) via its editing domain.</text>
</comment>
<comment type="catalytic activity">
    <reaction evidence="1">
        <text>tRNA(Ala) + L-alanine + ATP = L-alanyl-tRNA(Ala) + AMP + diphosphate</text>
        <dbReference type="Rhea" id="RHEA:12540"/>
        <dbReference type="Rhea" id="RHEA-COMP:9657"/>
        <dbReference type="Rhea" id="RHEA-COMP:9923"/>
        <dbReference type="ChEBI" id="CHEBI:30616"/>
        <dbReference type="ChEBI" id="CHEBI:33019"/>
        <dbReference type="ChEBI" id="CHEBI:57972"/>
        <dbReference type="ChEBI" id="CHEBI:78442"/>
        <dbReference type="ChEBI" id="CHEBI:78497"/>
        <dbReference type="ChEBI" id="CHEBI:456215"/>
        <dbReference type="EC" id="6.1.1.7"/>
    </reaction>
</comment>
<comment type="cofactor">
    <cofactor evidence="1">
        <name>Zn(2+)</name>
        <dbReference type="ChEBI" id="CHEBI:29105"/>
    </cofactor>
    <text evidence="1">Binds 1 zinc ion per subunit.</text>
</comment>
<comment type="subcellular location">
    <subcellularLocation>
        <location evidence="1">Cytoplasm</location>
    </subcellularLocation>
</comment>
<comment type="domain">
    <text evidence="1">Consists of three domains; the N-terminal catalytic domain, the editing domain and the C-terminal C-Ala domain. The editing domain removes incorrectly charged amino acids, while the C-Ala domain, along with tRNA(Ala), serves as a bridge to cooperatively bring together the editing and aminoacylation centers thus stimulating deacylation of misacylated tRNAs.</text>
</comment>
<comment type="similarity">
    <text evidence="1">Belongs to the class-II aminoacyl-tRNA synthetase family.</text>
</comment>
<dbReference type="EC" id="6.1.1.7" evidence="1"/>
<dbReference type="EMBL" id="CP000569">
    <property type="protein sequence ID" value="ABN73754.1"/>
    <property type="molecule type" value="Genomic_DNA"/>
</dbReference>
<dbReference type="RefSeq" id="WP_009874694.1">
    <property type="nucleotide sequence ID" value="NC_009053.1"/>
</dbReference>
<dbReference type="SMR" id="A3N018"/>
<dbReference type="STRING" id="416269.APL_0654"/>
<dbReference type="EnsemblBacteria" id="ABN73754">
    <property type="protein sequence ID" value="ABN73754"/>
    <property type="gene ID" value="APL_0654"/>
</dbReference>
<dbReference type="KEGG" id="apl:APL_0654"/>
<dbReference type="PATRIC" id="fig|416269.6.peg.685"/>
<dbReference type="eggNOG" id="COG0013">
    <property type="taxonomic scope" value="Bacteria"/>
</dbReference>
<dbReference type="HOGENOM" id="CLU_004485_1_1_6"/>
<dbReference type="Proteomes" id="UP000001432">
    <property type="component" value="Chromosome"/>
</dbReference>
<dbReference type="GO" id="GO:0005829">
    <property type="term" value="C:cytosol"/>
    <property type="evidence" value="ECO:0007669"/>
    <property type="project" value="TreeGrafter"/>
</dbReference>
<dbReference type="GO" id="GO:0004813">
    <property type="term" value="F:alanine-tRNA ligase activity"/>
    <property type="evidence" value="ECO:0007669"/>
    <property type="project" value="UniProtKB-UniRule"/>
</dbReference>
<dbReference type="GO" id="GO:0002161">
    <property type="term" value="F:aminoacyl-tRNA deacylase activity"/>
    <property type="evidence" value="ECO:0007669"/>
    <property type="project" value="TreeGrafter"/>
</dbReference>
<dbReference type="GO" id="GO:0005524">
    <property type="term" value="F:ATP binding"/>
    <property type="evidence" value="ECO:0007669"/>
    <property type="project" value="UniProtKB-UniRule"/>
</dbReference>
<dbReference type="GO" id="GO:0000049">
    <property type="term" value="F:tRNA binding"/>
    <property type="evidence" value="ECO:0007669"/>
    <property type="project" value="UniProtKB-KW"/>
</dbReference>
<dbReference type="GO" id="GO:0008270">
    <property type="term" value="F:zinc ion binding"/>
    <property type="evidence" value="ECO:0007669"/>
    <property type="project" value="UniProtKB-UniRule"/>
</dbReference>
<dbReference type="GO" id="GO:0006419">
    <property type="term" value="P:alanyl-tRNA aminoacylation"/>
    <property type="evidence" value="ECO:0007669"/>
    <property type="project" value="UniProtKB-UniRule"/>
</dbReference>
<dbReference type="GO" id="GO:0045892">
    <property type="term" value="P:negative regulation of DNA-templated transcription"/>
    <property type="evidence" value="ECO:0007669"/>
    <property type="project" value="TreeGrafter"/>
</dbReference>
<dbReference type="CDD" id="cd00673">
    <property type="entry name" value="AlaRS_core"/>
    <property type="match status" value="1"/>
</dbReference>
<dbReference type="FunFam" id="2.40.30.130:FF:000001">
    <property type="entry name" value="Alanine--tRNA ligase"/>
    <property type="match status" value="1"/>
</dbReference>
<dbReference type="FunFam" id="3.10.310.40:FF:000001">
    <property type="entry name" value="Alanine--tRNA ligase"/>
    <property type="match status" value="1"/>
</dbReference>
<dbReference type="FunFam" id="3.30.54.20:FF:000001">
    <property type="entry name" value="Alanine--tRNA ligase"/>
    <property type="match status" value="1"/>
</dbReference>
<dbReference type="FunFam" id="3.30.930.10:FF:000004">
    <property type="entry name" value="Alanine--tRNA ligase"/>
    <property type="match status" value="1"/>
</dbReference>
<dbReference type="FunFam" id="3.30.980.10:FF:000004">
    <property type="entry name" value="Alanine--tRNA ligase, cytoplasmic"/>
    <property type="match status" value="1"/>
</dbReference>
<dbReference type="Gene3D" id="2.40.30.130">
    <property type="match status" value="1"/>
</dbReference>
<dbReference type="Gene3D" id="3.10.310.40">
    <property type="match status" value="1"/>
</dbReference>
<dbReference type="Gene3D" id="3.30.54.20">
    <property type="match status" value="1"/>
</dbReference>
<dbReference type="Gene3D" id="6.10.250.550">
    <property type="match status" value="1"/>
</dbReference>
<dbReference type="Gene3D" id="3.30.930.10">
    <property type="entry name" value="Bira Bifunctional Protein, Domain 2"/>
    <property type="match status" value="1"/>
</dbReference>
<dbReference type="Gene3D" id="3.30.980.10">
    <property type="entry name" value="Threonyl-trna Synthetase, Chain A, domain 2"/>
    <property type="match status" value="1"/>
</dbReference>
<dbReference type="HAMAP" id="MF_00036_B">
    <property type="entry name" value="Ala_tRNA_synth_B"/>
    <property type="match status" value="1"/>
</dbReference>
<dbReference type="InterPro" id="IPR045864">
    <property type="entry name" value="aa-tRNA-synth_II/BPL/LPL"/>
</dbReference>
<dbReference type="InterPro" id="IPR002318">
    <property type="entry name" value="Ala-tRNA-lgiase_IIc"/>
</dbReference>
<dbReference type="InterPro" id="IPR018162">
    <property type="entry name" value="Ala-tRNA-ligase_IIc_anticod-bd"/>
</dbReference>
<dbReference type="InterPro" id="IPR018165">
    <property type="entry name" value="Ala-tRNA-synth_IIc_core"/>
</dbReference>
<dbReference type="InterPro" id="IPR018164">
    <property type="entry name" value="Ala-tRNA-synth_IIc_N"/>
</dbReference>
<dbReference type="InterPro" id="IPR050058">
    <property type="entry name" value="Ala-tRNA_ligase"/>
</dbReference>
<dbReference type="InterPro" id="IPR023033">
    <property type="entry name" value="Ala_tRNA_ligase_euk/bac"/>
</dbReference>
<dbReference type="InterPro" id="IPR003156">
    <property type="entry name" value="DHHA1_dom"/>
</dbReference>
<dbReference type="InterPro" id="IPR018163">
    <property type="entry name" value="Thr/Ala-tRNA-synth_IIc_edit"/>
</dbReference>
<dbReference type="InterPro" id="IPR009000">
    <property type="entry name" value="Transl_B-barrel_sf"/>
</dbReference>
<dbReference type="InterPro" id="IPR012947">
    <property type="entry name" value="tRNA_SAD"/>
</dbReference>
<dbReference type="NCBIfam" id="TIGR00344">
    <property type="entry name" value="alaS"/>
    <property type="match status" value="1"/>
</dbReference>
<dbReference type="PANTHER" id="PTHR11777:SF9">
    <property type="entry name" value="ALANINE--TRNA LIGASE, CYTOPLASMIC"/>
    <property type="match status" value="1"/>
</dbReference>
<dbReference type="PANTHER" id="PTHR11777">
    <property type="entry name" value="ALANYL-TRNA SYNTHETASE"/>
    <property type="match status" value="1"/>
</dbReference>
<dbReference type="Pfam" id="PF02272">
    <property type="entry name" value="DHHA1"/>
    <property type="match status" value="1"/>
</dbReference>
<dbReference type="Pfam" id="PF01411">
    <property type="entry name" value="tRNA-synt_2c"/>
    <property type="match status" value="1"/>
</dbReference>
<dbReference type="Pfam" id="PF07973">
    <property type="entry name" value="tRNA_SAD"/>
    <property type="match status" value="1"/>
</dbReference>
<dbReference type="PRINTS" id="PR00980">
    <property type="entry name" value="TRNASYNTHALA"/>
</dbReference>
<dbReference type="SMART" id="SM00863">
    <property type="entry name" value="tRNA_SAD"/>
    <property type="match status" value="1"/>
</dbReference>
<dbReference type="SUPFAM" id="SSF55681">
    <property type="entry name" value="Class II aaRS and biotin synthetases"/>
    <property type="match status" value="1"/>
</dbReference>
<dbReference type="SUPFAM" id="SSF101353">
    <property type="entry name" value="Putative anticodon-binding domain of alanyl-tRNA synthetase (AlaRS)"/>
    <property type="match status" value="1"/>
</dbReference>
<dbReference type="SUPFAM" id="SSF55186">
    <property type="entry name" value="ThrRS/AlaRS common domain"/>
    <property type="match status" value="1"/>
</dbReference>
<dbReference type="SUPFAM" id="SSF50447">
    <property type="entry name" value="Translation proteins"/>
    <property type="match status" value="1"/>
</dbReference>
<dbReference type="PROSITE" id="PS50860">
    <property type="entry name" value="AA_TRNA_LIGASE_II_ALA"/>
    <property type="match status" value="1"/>
</dbReference>
<keyword id="KW-0030">Aminoacyl-tRNA synthetase</keyword>
<keyword id="KW-0067">ATP-binding</keyword>
<keyword id="KW-0963">Cytoplasm</keyword>
<keyword id="KW-0436">Ligase</keyword>
<keyword id="KW-0479">Metal-binding</keyword>
<keyword id="KW-0547">Nucleotide-binding</keyword>
<keyword id="KW-0648">Protein biosynthesis</keyword>
<keyword id="KW-1185">Reference proteome</keyword>
<keyword id="KW-0694">RNA-binding</keyword>
<keyword id="KW-0820">tRNA-binding</keyword>
<keyword id="KW-0862">Zinc</keyword>
<feature type="chain" id="PRO_0000347477" description="Alanine--tRNA ligase">
    <location>
        <begin position="1"/>
        <end position="874"/>
    </location>
</feature>
<feature type="binding site" evidence="1">
    <location>
        <position position="563"/>
    </location>
    <ligand>
        <name>Zn(2+)</name>
        <dbReference type="ChEBI" id="CHEBI:29105"/>
    </ligand>
</feature>
<feature type="binding site" evidence="1">
    <location>
        <position position="567"/>
    </location>
    <ligand>
        <name>Zn(2+)</name>
        <dbReference type="ChEBI" id="CHEBI:29105"/>
    </ligand>
</feature>
<feature type="binding site" evidence="1">
    <location>
        <position position="665"/>
    </location>
    <ligand>
        <name>Zn(2+)</name>
        <dbReference type="ChEBI" id="CHEBI:29105"/>
    </ligand>
</feature>
<feature type="binding site" evidence="1">
    <location>
        <position position="669"/>
    </location>
    <ligand>
        <name>Zn(2+)</name>
        <dbReference type="ChEBI" id="CHEBI:29105"/>
    </ligand>
</feature>
<gene>
    <name evidence="1" type="primary">alaS</name>
    <name type="ordered locus">APL_0654</name>
</gene>
<accession>A3N018</accession>
<organism>
    <name type="scientific">Actinobacillus pleuropneumoniae serotype 5b (strain L20)</name>
    <dbReference type="NCBI Taxonomy" id="416269"/>
    <lineage>
        <taxon>Bacteria</taxon>
        <taxon>Pseudomonadati</taxon>
        <taxon>Pseudomonadota</taxon>
        <taxon>Gammaproteobacteria</taxon>
        <taxon>Pasteurellales</taxon>
        <taxon>Pasteurellaceae</taxon>
        <taxon>Actinobacillus</taxon>
    </lineage>
</organism>
<sequence length="874" mass="96330">MKTTSEIRQSFLDFFHSKGHTVVPSSSLVPENDPTLLFTNAGMNQFKDVFLGLEKRPYTRATTAQRCVRAGGKHNDLENVGYTARHHTFFEMMGNFSFGDYFKHDAIQFGWEYLTSPQWLGLPKEKLYVTVYETDDEAYDIWNKIVGVPTDHIIRIGDNKGAPYASDNFWAMGDTGPCGPCTEIFYDHGETFWGGLPGSPEEDGDRYIEVWNIVFMQFNRLADGTMEKLPKPSVDTGMGLERMTAVMQHVNSNYETDIFQTLIKEVAGLLNVSDLDNKSLRVVADHIRACSYLIADGVVPSNEGRGYVLRRIIRRAVRHGNLLGAKEAFFYKLVPTLATVMGHAGEVLTQKQAHIQKTLKAEEEQFARTLERGLALLEDALTKVENNTLSGEVAFKLYDTYGFPLDLTADVCRERELTIDEAGFEAEMTAQRERAKASSNFGTDYNNVIKVEGQTDFIGYDNLEAQATIVGLFSNGKAVDTIQSGESAVIILDQTSFYAEMGGQVGDSGLISTEICNFAVNDTQKYGQVFGHIGQLTSGSLSIGDKVTATVHATRRIAITANHSATHLLHSALREVLGDHVAQKGSLVSENILRFDFSQPEAISKSQLEEIERIVNRKIRENIQVTIETMDIESAKKKGAMALFGEKYGDVVRVVGMTEFSIELCGGTHVQRTGDIGLFKLVSEGAVAAGIRRVEAVTAETAIEWLHNQQKVLQQSAEFLKADSNSLVEKIQQLQDKAKRTEKELQQLKDKLAAQAGSELVKQANKINGVNVVVQKLENVEVKSLRTMVDDLKNQLESAIVVFGTVADEKVNLIVGVTKDLSSKVNAGELVGAMAQQVGGKGGGRADMAMAGGSEPQNLDNALKFAEEWIQAKL</sequence>
<protein>
    <recommendedName>
        <fullName evidence="1">Alanine--tRNA ligase</fullName>
        <ecNumber evidence="1">6.1.1.7</ecNumber>
    </recommendedName>
    <alternativeName>
        <fullName evidence="1">Alanyl-tRNA synthetase</fullName>
        <shortName evidence="1">AlaRS</shortName>
    </alternativeName>
</protein>
<evidence type="ECO:0000255" key="1">
    <source>
        <dbReference type="HAMAP-Rule" id="MF_00036"/>
    </source>
</evidence>
<name>SYA_ACTP2</name>